<gene>
    <name type="ordered locus">FRAAL3718</name>
</gene>
<name>Y3718_FRAAA</name>
<protein>
    <recommendedName>
        <fullName>Putative S-adenosyl-L-methionine-dependent methyltransferase FRAAL3718</fullName>
        <ecNumber>2.1.1.-</ecNumber>
    </recommendedName>
</protein>
<organism>
    <name type="scientific">Frankia alni (strain DSM 45986 / CECT 9034 / ACN14a)</name>
    <dbReference type="NCBI Taxonomy" id="326424"/>
    <lineage>
        <taxon>Bacteria</taxon>
        <taxon>Bacillati</taxon>
        <taxon>Actinomycetota</taxon>
        <taxon>Actinomycetes</taxon>
        <taxon>Frankiales</taxon>
        <taxon>Frankiaceae</taxon>
        <taxon>Frankia</taxon>
    </lineage>
</organism>
<dbReference type="EC" id="2.1.1.-"/>
<dbReference type="EMBL" id="CT573213">
    <property type="protein sequence ID" value="CAJ62361.1"/>
    <property type="molecule type" value="Genomic_DNA"/>
</dbReference>
<dbReference type="RefSeq" id="WP_011604857.1">
    <property type="nucleotide sequence ID" value="NC_008278.1"/>
</dbReference>
<dbReference type="SMR" id="Q0RJF1"/>
<dbReference type="STRING" id="326424.FRAAL3718"/>
<dbReference type="KEGG" id="fal:FRAAL3718"/>
<dbReference type="eggNOG" id="COG3315">
    <property type="taxonomic scope" value="Bacteria"/>
</dbReference>
<dbReference type="HOGENOM" id="CLU_056160_2_0_11"/>
<dbReference type="OrthoDB" id="9806164at2"/>
<dbReference type="Proteomes" id="UP000000657">
    <property type="component" value="Chromosome"/>
</dbReference>
<dbReference type="GO" id="GO:0008168">
    <property type="term" value="F:methyltransferase activity"/>
    <property type="evidence" value="ECO:0007669"/>
    <property type="project" value="UniProtKB-KW"/>
</dbReference>
<dbReference type="GO" id="GO:0032259">
    <property type="term" value="P:methylation"/>
    <property type="evidence" value="ECO:0007669"/>
    <property type="project" value="UniProtKB-KW"/>
</dbReference>
<dbReference type="Gene3D" id="3.40.50.150">
    <property type="entry name" value="Vaccinia Virus protein VP39"/>
    <property type="match status" value="1"/>
</dbReference>
<dbReference type="InterPro" id="IPR007213">
    <property type="entry name" value="Ppm1/Ppm2/Tcmp"/>
</dbReference>
<dbReference type="InterPro" id="IPR029063">
    <property type="entry name" value="SAM-dependent_MTases_sf"/>
</dbReference>
<dbReference type="InterPro" id="IPR011610">
    <property type="entry name" value="SAM_mthyl_Trfase_ML2640-like"/>
</dbReference>
<dbReference type="NCBIfam" id="TIGR00027">
    <property type="entry name" value="mthyl_TIGR00027"/>
    <property type="match status" value="1"/>
</dbReference>
<dbReference type="PANTHER" id="PTHR43619">
    <property type="entry name" value="S-ADENOSYL-L-METHIONINE-DEPENDENT METHYLTRANSFERASE YKTD-RELATED"/>
    <property type="match status" value="1"/>
</dbReference>
<dbReference type="PANTHER" id="PTHR43619:SF2">
    <property type="entry name" value="S-ADENOSYL-L-METHIONINE-DEPENDENT METHYLTRANSFERASES SUPERFAMILY PROTEIN"/>
    <property type="match status" value="1"/>
</dbReference>
<dbReference type="Pfam" id="PF04072">
    <property type="entry name" value="LCM"/>
    <property type="match status" value="1"/>
</dbReference>
<dbReference type="SUPFAM" id="SSF53335">
    <property type="entry name" value="S-adenosyl-L-methionine-dependent methyltransferases"/>
    <property type="match status" value="1"/>
</dbReference>
<reference key="1">
    <citation type="journal article" date="2007" name="Genome Res.">
        <title>Genome characteristics of facultatively symbiotic Frankia sp. strains reflect host range and host plant biogeography.</title>
        <authorList>
            <person name="Normand P."/>
            <person name="Lapierre P."/>
            <person name="Tisa L.S."/>
            <person name="Gogarten J.P."/>
            <person name="Alloisio N."/>
            <person name="Bagnarol E."/>
            <person name="Bassi C.A."/>
            <person name="Berry A.M."/>
            <person name="Bickhart D.M."/>
            <person name="Choisne N."/>
            <person name="Couloux A."/>
            <person name="Cournoyer B."/>
            <person name="Cruveiller S."/>
            <person name="Daubin V."/>
            <person name="Demange N."/>
            <person name="Francino M.P."/>
            <person name="Goltsman E."/>
            <person name="Huang Y."/>
            <person name="Kopp O.R."/>
            <person name="Labarre L."/>
            <person name="Lapidus A."/>
            <person name="Lavire C."/>
            <person name="Marechal J."/>
            <person name="Martinez M."/>
            <person name="Mastronunzio J.E."/>
            <person name="Mullin B.C."/>
            <person name="Niemann J."/>
            <person name="Pujic P."/>
            <person name="Rawnsley T."/>
            <person name="Rouy Z."/>
            <person name="Schenowitz C."/>
            <person name="Sellstedt A."/>
            <person name="Tavares F."/>
            <person name="Tomkins J.P."/>
            <person name="Vallenet D."/>
            <person name="Valverde C."/>
            <person name="Wall L.G."/>
            <person name="Wang Y."/>
            <person name="Medigue C."/>
            <person name="Benson D.R."/>
        </authorList>
    </citation>
    <scope>NUCLEOTIDE SEQUENCE [LARGE SCALE GENOMIC DNA]</scope>
    <source>
        <strain>DSM 45986 / CECT 9034 / ACN14a</strain>
    </source>
</reference>
<evidence type="ECO:0000250" key="1"/>
<evidence type="ECO:0000305" key="2"/>
<feature type="chain" id="PRO_0000361096" description="Putative S-adenosyl-L-methionine-dependent methyltransferase FRAAL3718">
    <location>
        <begin position="1"/>
        <end position="286"/>
    </location>
</feature>
<feature type="binding site" evidence="1">
    <location>
        <position position="122"/>
    </location>
    <ligand>
        <name>S-adenosyl-L-methionine</name>
        <dbReference type="ChEBI" id="CHEBI:59789"/>
    </ligand>
</feature>
<feature type="binding site" evidence="1">
    <location>
        <begin position="151"/>
        <end position="152"/>
    </location>
    <ligand>
        <name>S-adenosyl-L-methionine</name>
        <dbReference type="ChEBI" id="CHEBI:59789"/>
    </ligand>
</feature>
<keyword id="KW-0489">Methyltransferase</keyword>
<keyword id="KW-1185">Reference proteome</keyword>
<keyword id="KW-0949">S-adenosyl-L-methionine</keyword>
<keyword id="KW-0808">Transferase</keyword>
<sequence length="286" mass="30536">MTDAAGRVEPSGVWATAVGVARVRAMETAREQPLFRDPLALAFATAGGRGPGTLSPPRADEAARRRWLEVALSIVIRTKFLDDLLNRAVASGVRQVVLLGAGMDSRAFRMDWPTGTRLFEVDTAEPLGFKASVLRQERAVARCERITVPVDLREDWPGALAAAGHDPAQPTVWIAEGLLIYLPADAVQSLLERVGALSAAGSRMGLTLGTRGVVERFRGDAAAGSAASMWVSEMPEDPVGWLDGLGWQAETFTLRDRAAAYGRPLLTPSQQDEGTGALVSAVRTAH</sequence>
<proteinExistence type="inferred from homology"/>
<accession>Q0RJF1</accession>
<comment type="function">
    <text evidence="1">Exhibits S-adenosyl-L-methionine-dependent methyltransferase activity.</text>
</comment>
<comment type="similarity">
    <text evidence="2">Belongs to the UPF0677 family.</text>
</comment>